<protein>
    <recommendedName>
        <fullName evidence="1">Recombination protein RecR</fullName>
    </recommendedName>
</protein>
<name>RECR_MOOTA</name>
<dbReference type="EMBL" id="CP000232">
    <property type="protein sequence ID" value="ABC18369.1"/>
    <property type="molecule type" value="Genomic_DNA"/>
</dbReference>
<dbReference type="RefSeq" id="YP_428912.1">
    <property type="nucleotide sequence ID" value="NC_007644.1"/>
</dbReference>
<dbReference type="SMR" id="Q2RMH0"/>
<dbReference type="STRING" id="264732.Moth_0029"/>
<dbReference type="EnsemblBacteria" id="ABC18369">
    <property type="protein sequence ID" value="ABC18369"/>
    <property type="gene ID" value="Moth_0029"/>
</dbReference>
<dbReference type="KEGG" id="mta:Moth_0029"/>
<dbReference type="PATRIC" id="fig|264732.11.peg.30"/>
<dbReference type="eggNOG" id="COG0353">
    <property type="taxonomic scope" value="Bacteria"/>
</dbReference>
<dbReference type="HOGENOM" id="CLU_060739_1_0_9"/>
<dbReference type="OrthoDB" id="9802672at2"/>
<dbReference type="GO" id="GO:0003677">
    <property type="term" value="F:DNA binding"/>
    <property type="evidence" value="ECO:0007669"/>
    <property type="project" value="UniProtKB-UniRule"/>
</dbReference>
<dbReference type="GO" id="GO:0008270">
    <property type="term" value="F:zinc ion binding"/>
    <property type="evidence" value="ECO:0007669"/>
    <property type="project" value="UniProtKB-KW"/>
</dbReference>
<dbReference type="GO" id="GO:0006310">
    <property type="term" value="P:DNA recombination"/>
    <property type="evidence" value="ECO:0007669"/>
    <property type="project" value="UniProtKB-UniRule"/>
</dbReference>
<dbReference type="GO" id="GO:0006281">
    <property type="term" value="P:DNA repair"/>
    <property type="evidence" value="ECO:0007669"/>
    <property type="project" value="UniProtKB-UniRule"/>
</dbReference>
<dbReference type="CDD" id="cd01025">
    <property type="entry name" value="TOPRIM_recR"/>
    <property type="match status" value="1"/>
</dbReference>
<dbReference type="Gene3D" id="3.30.60.80">
    <property type="match status" value="1"/>
</dbReference>
<dbReference type="Gene3D" id="3.40.1360.10">
    <property type="match status" value="1"/>
</dbReference>
<dbReference type="Gene3D" id="6.10.250.240">
    <property type="match status" value="1"/>
</dbReference>
<dbReference type="Gene3D" id="1.10.8.420">
    <property type="entry name" value="RecR Domain 1"/>
    <property type="match status" value="1"/>
</dbReference>
<dbReference type="HAMAP" id="MF_00017">
    <property type="entry name" value="RecR"/>
    <property type="match status" value="1"/>
</dbReference>
<dbReference type="InterPro" id="IPR000093">
    <property type="entry name" value="DNA_Rcmb_RecR"/>
</dbReference>
<dbReference type="InterPro" id="IPR023627">
    <property type="entry name" value="Rcmb_RecR"/>
</dbReference>
<dbReference type="InterPro" id="IPR015967">
    <property type="entry name" value="Rcmb_RecR_Znf"/>
</dbReference>
<dbReference type="InterPro" id="IPR006171">
    <property type="entry name" value="TOPRIM_dom"/>
</dbReference>
<dbReference type="InterPro" id="IPR034137">
    <property type="entry name" value="TOPRIM_RecR"/>
</dbReference>
<dbReference type="NCBIfam" id="TIGR00615">
    <property type="entry name" value="recR"/>
    <property type="match status" value="1"/>
</dbReference>
<dbReference type="PANTHER" id="PTHR30446">
    <property type="entry name" value="RECOMBINATION PROTEIN RECR"/>
    <property type="match status" value="1"/>
</dbReference>
<dbReference type="PANTHER" id="PTHR30446:SF0">
    <property type="entry name" value="RECOMBINATION PROTEIN RECR"/>
    <property type="match status" value="1"/>
</dbReference>
<dbReference type="Pfam" id="PF21175">
    <property type="entry name" value="RecR_C"/>
    <property type="match status" value="1"/>
</dbReference>
<dbReference type="Pfam" id="PF21176">
    <property type="entry name" value="RecR_HhH"/>
    <property type="match status" value="1"/>
</dbReference>
<dbReference type="Pfam" id="PF02132">
    <property type="entry name" value="RecR_ZnF"/>
    <property type="match status" value="1"/>
</dbReference>
<dbReference type="Pfam" id="PF13662">
    <property type="entry name" value="Toprim_4"/>
    <property type="match status" value="1"/>
</dbReference>
<dbReference type="SMART" id="SM00493">
    <property type="entry name" value="TOPRIM"/>
    <property type="match status" value="1"/>
</dbReference>
<dbReference type="SUPFAM" id="SSF111304">
    <property type="entry name" value="Recombination protein RecR"/>
    <property type="match status" value="1"/>
</dbReference>
<dbReference type="PROSITE" id="PS01300">
    <property type="entry name" value="RECR"/>
    <property type="match status" value="1"/>
</dbReference>
<dbReference type="PROSITE" id="PS50880">
    <property type="entry name" value="TOPRIM"/>
    <property type="match status" value="1"/>
</dbReference>
<keyword id="KW-0227">DNA damage</keyword>
<keyword id="KW-0233">DNA recombination</keyword>
<keyword id="KW-0234">DNA repair</keyword>
<keyword id="KW-0479">Metal-binding</keyword>
<keyword id="KW-0862">Zinc</keyword>
<keyword id="KW-0863">Zinc-finger</keyword>
<evidence type="ECO:0000255" key="1">
    <source>
        <dbReference type="HAMAP-Rule" id="MF_00017"/>
    </source>
</evidence>
<organism>
    <name type="scientific">Moorella thermoacetica (strain ATCC 39073 / JCM 9320)</name>
    <dbReference type="NCBI Taxonomy" id="264732"/>
    <lineage>
        <taxon>Bacteria</taxon>
        <taxon>Bacillati</taxon>
        <taxon>Bacillota</taxon>
        <taxon>Clostridia</taxon>
        <taxon>Moorellales</taxon>
        <taxon>Moorellaceae</taxon>
        <taxon>Moorella</taxon>
    </lineage>
</organism>
<accession>Q2RMH0</accession>
<gene>
    <name evidence="1" type="primary">recR</name>
    <name type="ordered locus">Moth_0029</name>
</gene>
<reference key="1">
    <citation type="journal article" date="2008" name="Environ. Microbiol.">
        <title>The complete genome sequence of Moorella thermoacetica (f. Clostridium thermoaceticum).</title>
        <authorList>
            <person name="Pierce E."/>
            <person name="Xie G."/>
            <person name="Barabote R.D."/>
            <person name="Saunders E."/>
            <person name="Han C.S."/>
            <person name="Detter J.C."/>
            <person name="Richardson P."/>
            <person name="Brettin T.S."/>
            <person name="Das A."/>
            <person name="Ljungdahl L.G."/>
            <person name="Ragsdale S.W."/>
        </authorList>
    </citation>
    <scope>NUCLEOTIDE SEQUENCE [LARGE SCALE GENOMIC DNA]</scope>
    <source>
        <strain>ATCC 39073 / JCM 9320</strain>
    </source>
</reference>
<feature type="chain" id="PRO_1000001566" description="Recombination protein RecR">
    <location>
        <begin position="1"/>
        <end position="199"/>
    </location>
</feature>
<feature type="domain" description="Toprim" evidence="1">
    <location>
        <begin position="80"/>
        <end position="175"/>
    </location>
</feature>
<feature type="zinc finger region" description="C4-type" evidence="1">
    <location>
        <begin position="57"/>
        <end position="72"/>
    </location>
</feature>
<sequence length="199" mass="21938">MYYPEPLNKLITALGRLPGIGPKTAQRLAFHLLKVPASEARDLAAAILEARQKTIYCSICGNFTDRDPCRLCSDPERDHSCICVVEEARDIIALEKTRQYRGLYHVLQGAISPVDGIGPEQLRVKELLARLHDGKVKEVILATNADVEGESTALYLDKLLKTLGVKVTRLAYGLPVGGDLEYADEVTLARAFAGRHELE</sequence>
<comment type="function">
    <text evidence="1">May play a role in DNA repair. It seems to be involved in an RecBC-independent recombinational process of DNA repair. It may act with RecF and RecO.</text>
</comment>
<comment type="similarity">
    <text evidence="1">Belongs to the RecR family.</text>
</comment>
<proteinExistence type="inferred from homology"/>